<name>LIPA_TREDE</name>
<sequence length="290" mass="32592">MNFKAGFMTCNQRKPDWLKIKLPTGELSQEVSNTIKIHKLNTICTSGKCPNQGECWRCGTATFMICGNICTRACKFCNVPTGCPLPLNPNEPMEIAQSVEALKLKHVVLTSVDRDDIKDFGASHWVKVIRAVKQKTPNVTMEVLIPDFQGHEDLVSMIIEAKPEVISHNLETVRRLSPHVRSRATYDTSLKVLKQIADSGLVCKSGIMLGLGETRAEILETMDDLRKINCKVMTIGQYLRPSIKNIEVKEYVRPEVFEEYKQIGLEKGFSFVESGPLVRSSYHAEKHVLS</sequence>
<keyword id="KW-0004">4Fe-4S</keyword>
<keyword id="KW-0963">Cytoplasm</keyword>
<keyword id="KW-0408">Iron</keyword>
<keyword id="KW-0411">Iron-sulfur</keyword>
<keyword id="KW-0479">Metal-binding</keyword>
<keyword id="KW-1185">Reference proteome</keyword>
<keyword id="KW-0949">S-adenosyl-L-methionine</keyword>
<keyword id="KW-0808">Transferase</keyword>
<accession>P61199</accession>
<proteinExistence type="inferred from homology"/>
<gene>
    <name evidence="1" type="primary">lipA</name>
    <name type="ordered locus">TDE_1575</name>
</gene>
<dbReference type="EC" id="2.8.1.8" evidence="1"/>
<dbReference type="EMBL" id="AE017226">
    <property type="protein sequence ID" value="AAS12092.1"/>
    <property type="molecule type" value="Genomic_DNA"/>
</dbReference>
<dbReference type="RefSeq" id="NP_972181.1">
    <property type="nucleotide sequence ID" value="NC_002967.9"/>
</dbReference>
<dbReference type="SMR" id="P61199"/>
<dbReference type="STRING" id="243275.TDE_1575"/>
<dbReference type="PaxDb" id="243275-TDE_1575"/>
<dbReference type="KEGG" id="tde:TDE_1575"/>
<dbReference type="PATRIC" id="fig|243275.7.peg.1504"/>
<dbReference type="eggNOG" id="COG0320">
    <property type="taxonomic scope" value="Bacteria"/>
</dbReference>
<dbReference type="HOGENOM" id="CLU_033144_2_1_12"/>
<dbReference type="OrthoDB" id="9787898at2"/>
<dbReference type="UniPathway" id="UPA00538">
    <property type="reaction ID" value="UER00593"/>
</dbReference>
<dbReference type="Proteomes" id="UP000008212">
    <property type="component" value="Chromosome"/>
</dbReference>
<dbReference type="GO" id="GO:0005737">
    <property type="term" value="C:cytoplasm"/>
    <property type="evidence" value="ECO:0007669"/>
    <property type="project" value="UniProtKB-SubCell"/>
</dbReference>
<dbReference type="GO" id="GO:0051539">
    <property type="term" value="F:4 iron, 4 sulfur cluster binding"/>
    <property type="evidence" value="ECO:0007669"/>
    <property type="project" value="UniProtKB-UniRule"/>
</dbReference>
<dbReference type="GO" id="GO:0016992">
    <property type="term" value="F:lipoate synthase activity"/>
    <property type="evidence" value="ECO:0007669"/>
    <property type="project" value="UniProtKB-UniRule"/>
</dbReference>
<dbReference type="GO" id="GO:0046872">
    <property type="term" value="F:metal ion binding"/>
    <property type="evidence" value="ECO:0007669"/>
    <property type="project" value="UniProtKB-KW"/>
</dbReference>
<dbReference type="CDD" id="cd01335">
    <property type="entry name" value="Radical_SAM"/>
    <property type="match status" value="1"/>
</dbReference>
<dbReference type="FunFam" id="3.20.20.70:FF:000040">
    <property type="entry name" value="Lipoyl synthase"/>
    <property type="match status" value="1"/>
</dbReference>
<dbReference type="Gene3D" id="3.20.20.70">
    <property type="entry name" value="Aldolase class I"/>
    <property type="match status" value="1"/>
</dbReference>
<dbReference type="HAMAP" id="MF_00206">
    <property type="entry name" value="Lipoyl_synth"/>
    <property type="match status" value="1"/>
</dbReference>
<dbReference type="InterPro" id="IPR013785">
    <property type="entry name" value="Aldolase_TIM"/>
</dbReference>
<dbReference type="InterPro" id="IPR006638">
    <property type="entry name" value="Elp3/MiaA/NifB-like_rSAM"/>
</dbReference>
<dbReference type="InterPro" id="IPR003698">
    <property type="entry name" value="Lipoyl_synth"/>
</dbReference>
<dbReference type="InterPro" id="IPR007197">
    <property type="entry name" value="rSAM"/>
</dbReference>
<dbReference type="NCBIfam" id="TIGR00510">
    <property type="entry name" value="lipA"/>
    <property type="match status" value="1"/>
</dbReference>
<dbReference type="NCBIfam" id="NF004019">
    <property type="entry name" value="PRK05481.1"/>
    <property type="match status" value="1"/>
</dbReference>
<dbReference type="NCBIfam" id="NF009544">
    <property type="entry name" value="PRK12928.1"/>
    <property type="match status" value="1"/>
</dbReference>
<dbReference type="PANTHER" id="PTHR10949">
    <property type="entry name" value="LIPOYL SYNTHASE"/>
    <property type="match status" value="1"/>
</dbReference>
<dbReference type="PANTHER" id="PTHR10949:SF0">
    <property type="entry name" value="LIPOYL SYNTHASE, MITOCHONDRIAL"/>
    <property type="match status" value="1"/>
</dbReference>
<dbReference type="Pfam" id="PF04055">
    <property type="entry name" value="Radical_SAM"/>
    <property type="match status" value="1"/>
</dbReference>
<dbReference type="PIRSF" id="PIRSF005963">
    <property type="entry name" value="Lipoyl_synth"/>
    <property type="match status" value="1"/>
</dbReference>
<dbReference type="SFLD" id="SFLDF00271">
    <property type="entry name" value="lipoyl_synthase"/>
    <property type="match status" value="1"/>
</dbReference>
<dbReference type="SFLD" id="SFLDS00029">
    <property type="entry name" value="Radical_SAM"/>
    <property type="match status" value="1"/>
</dbReference>
<dbReference type="SMART" id="SM00729">
    <property type="entry name" value="Elp3"/>
    <property type="match status" value="1"/>
</dbReference>
<dbReference type="SUPFAM" id="SSF102114">
    <property type="entry name" value="Radical SAM enzymes"/>
    <property type="match status" value="1"/>
</dbReference>
<dbReference type="PROSITE" id="PS51918">
    <property type="entry name" value="RADICAL_SAM"/>
    <property type="match status" value="1"/>
</dbReference>
<organism>
    <name type="scientific">Treponema denticola (strain ATCC 35405 / DSM 14222 / CIP 103919 / JCM 8153 / KCTC 15104)</name>
    <dbReference type="NCBI Taxonomy" id="243275"/>
    <lineage>
        <taxon>Bacteria</taxon>
        <taxon>Pseudomonadati</taxon>
        <taxon>Spirochaetota</taxon>
        <taxon>Spirochaetia</taxon>
        <taxon>Spirochaetales</taxon>
        <taxon>Treponemataceae</taxon>
        <taxon>Treponema</taxon>
    </lineage>
</organism>
<feature type="chain" id="PRO_0000102374" description="Lipoyl synthase">
    <location>
        <begin position="1"/>
        <end position="290"/>
    </location>
</feature>
<feature type="domain" description="Radical SAM core" evidence="2">
    <location>
        <begin position="56"/>
        <end position="270"/>
    </location>
</feature>
<feature type="binding site" evidence="1">
    <location>
        <position position="44"/>
    </location>
    <ligand>
        <name>[4Fe-4S] cluster</name>
        <dbReference type="ChEBI" id="CHEBI:49883"/>
        <label>1</label>
    </ligand>
</feature>
<feature type="binding site" evidence="1">
    <location>
        <position position="49"/>
    </location>
    <ligand>
        <name>[4Fe-4S] cluster</name>
        <dbReference type="ChEBI" id="CHEBI:49883"/>
        <label>1</label>
    </ligand>
</feature>
<feature type="binding site" evidence="1">
    <location>
        <position position="55"/>
    </location>
    <ligand>
        <name>[4Fe-4S] cluster</name>
        <dbReference type="ChEBI" id="CHEBI:49883"/>
        <label>1</label>
    </ligand>
</feature>
<feature type="binding site" evidence="1">
    <location>
        <position position="70"/>
    </location>
    <ligand>
        <name>[4Fe-4S] cluster</name>
        <dbReference type="ChEBI" id="CHEBI:49883"/>
        <label>2</label>
        <note>4Fe-4S-S-AdoMet</note>
    </ligand>
</feature>
<feature type="binding site" evidence="1">
    <location>
        <position position="74"/>
    </location>
    <ligand>
        <name>[4Fe-4S] cluster</name>
        <dbReference type="ChEBI" id="CHEBI:49883"/>
        <label>2</label>
        <note>4Fe-4S-S-AdoMet</note>
    </ligand>
</feature>
<feature type="binding site" evidence="1">
    <location>
        <position position="77"/>
    </location>
    <ligand>
        <name>[4Fe-4S] cluster</name>
        <dbReference type="ChEBI" id="CHEBI:49883"/>
        <label>2</label>
        <note>4Fe-4S-S-AdoMet</note>
    </ligand>
</feature>
<feature type="binding site" evidence="1">
    <location>
        <position position="281"/>
    </location>
    <ligand>
        <name>[4Fe-4S] cluster</name>
        <dbReference type="ChEBI" id="CHEBI:49883"/>
        <label>1</label>
    </ligand>
</feature>
<comment type="function">
    <text evidence="1">Catalyzes the radical-mediated insertion of two sulfur atoms into the C-6 and C-8 positions of the octanoyl moiety bound to the lipoyl domains of lipoate-dependent enzymes, thereby converting the octanoylated domains into lipoylated derivatives.</text>
</comment>
<comment type="catalytic activity">
    <reaction evidence="1">
        <text>[[Fe-S] cluster scaffold protein carrying a second [4Fe-4S](2+) cluster] + N(6)-octanoyl-L-lysyl-[protein] + 2 oxidized [2Fe-2S]-[ferredoxin] + 2 S-adenosyl-L-methionine + 4 H(+) = [[Fe-S] cluster scaffold protein] + N(6)-[(R)-dihydrolipoyl]-L-lysyl-[protein] + 4 Fe(3+) + 2 hydrogen sulfide + 2 5'-deoxyadenosine + 2 L-methionine + 2 reduced [2Fe-2S]-[ferredoxin]</text>
        <dbReference type="Rhea" id="RHEA:16585"/>
        <dbReference type="Rhea" id="RHEA-COMP:9928"/>
        <dbReference type="Rhea" id="RHEA-COMP:10000"/>
        <dbReference type="Rhea" id="RHEA-COMP:10001"/>
        <dbReference type="Rhea" id="RHEA-COMP:10475"/>
        <dbReference type="Rhea" id="RHEA-COMP:14568"/>
        <dbReference type="Rhea" id="RHEA-COMP:14569"/>
        <dbReference type="ChEBI" id="CHEBI:15378"/>
        <dbReference type="ChEBI" id="CHEBI:17319"/>
        <dbReference type="ChEBI" id="CHEBI:29034"/>
        <dbReference type="ChEBI" id="CHEBI:29919"/>
        <dbReference type="ChEBI" id="CHEBI:33722"/>
        <dbReference type="ChEBI" id="CHEBI:33737"/>
        <dbReference type="ChEBI" id="CHEBI:33738"/>
        <dbReference type="ChEBI" id="CHEBI:57844"/>
        <dbReference type="ChEBI" id="CHEBI:59789"/>
        <dbReference type="ChEBI" id="CHEBI:78809"/>
        <dbReference type="ChEBI" id="CHEBI:83100"/>
        <dbReference type="EC" id="2.8.1.8"/>
    </reaction>
</comment>
<comment type="cofactor">
    <cofactor evidence="1">
        <name>[4Fe-4S] cluster</name>
        <dbReference type="ChEBI" id="CHEBI:49883"/>
    </cofactor>
    <text evidence="1">Binds 2 [4Fe-4S] clusters per subunit. One cluster is coordinated with 3 cysteines and an exchangeable S-adenosyl-L-methionine.</text>
</comment>
<comment type="pathway">
    <text evidence="1">Protein modification; protein lipoylation via endogenous pathway; protein N(6)-(lipoyl)lysine from octanoyl-[acyl-carrier-protein]: step 2/2.</text>
</comment>
<comment type="subcellular location">
    <subcellularLocation>
        <location evidence="1">Cytoplasm</location>
    </subcellularLocation>
</comment>
<comment type="similarity">
    <text evidence="1">Belongs to the radical SAM superfamily. Lipoyl synthase family.</text>
</comment>
<reference key="1">
    <citation type="journal article" date="2004" name="Proc. Natl. Acad. Sci. U.S.A.">
        <title>Comparison of the genome of the oral pathogen Treponema denticola with other spirochete genomes.</title>
        <authorList>
            <person name="Seshadri R."/>
            <person name="Myers G.S.A."/>
            <person name="Tettelin H."/>
            <person name="Eisen J.A."/>
            <person name="Heidelberg J.F."/>
            <person name="Dodson R.J."/>
            <person name="Davidsen T.M."/>
            <person name="DeBoy R.T."/>
            <person name="Fouts D.E."/>
            <person name="Haft D.H."/>
            <person name="Selengut J."/>
            <person name="Ren Q."/>
            <person name="Brinkac L.M."/>
            <person name="Madupu R."/>
            <person name="Kolonay J.F."/>
            <person name="Durkin S.A."/>
            <person name="Daugherty S.C."/>
            <person name="Shetty J."/>
            <person name="Shvartsbeyn A."/>
            <person name="Gebregeorgis E."/>
            <person name="Geer K."/>
            <person name="Tsegaye G."/>
            <person name="Malek J.A."/>
            <person name="Ayodeji B."/>
            <person name="Shatsman S."/>
            <person name="McLeod M.P."/>
            <person name="Smajs D."/>
            <person name="Howell J.K."/>
            <person name="Pal S."/>
            <person name="Amin A."/>
            <person name="Vashisth P."/>
            <person name="McNeill T.Z."/>
            <person name="Xiang Q."/>
            <person name="Sodergren E."/>
            <person name="Baca E."/>
            <person name="Weinstock G.M."/>
            <person name="Norris S.J."/>
            <person name="Fraser C.M."/>
            <person name="Paulsen I.T."/>
        </authorList>
    </citation>
    <scope>NUCLEOTIDE SEQUENCE [LARGE SCALE GENOMIC DNA]</scope>
    <source>
        <strain>ATCC 35405 / DSM 14222 / CIP 103919 / JCM 8153 / KCTC 15104</strain>
    </source>
</reference>
<evidence type="ECO:0000255" key="1">
    <source>
        <dbReference type="HAMAP-Rule" id="MF_00206"/>
    </source>
</evidence>
<evidence type="ECO:0000255" key="2">
    <source>
        <dbReference type="PROSITE-ProRule" id="PRU01266"/>
    </source>
</evidence>
<protein>
    <recommendedName>
        <fullName evidence="1">Lipoyl synthase</fullName>
        <ecNumber evidence="1">2.8.1.8</ecNumber>
    </recommendedName>
    <alternativeName>
        <fullName evidence="1">Lip-syn</fullName>
        <shortName evidence="1">LS</shortName>
    </alternativeName>
    <alternativeName>
        <fullName evidence="1">Lipoate synthase</fullName>
    </alternativeName>
    <alternativeName>
        <fullName evidence="1">Lipoic acid synthase</fullName>
    </alternativeName>
    <alternativeName>
        <fullName evidence="1">Sulfur insertion protein LipA</fullName>
    </alternativeName>
</protein>